<keyword id="KW-0002">3D-structure</keyword>
<keyword id="KW-0157">Chromophore</keyword>
<keyword id="KW-0238">DNA-binding</keyword>
<keyword id="KW-0274">FAD</keyword>
<keyword id="KW-0285">Flavoprotein</keyword>
<keyword id="KW-1185">Reference proteome</keyword>
<keyword id="KW-0678">Repressor</keyword>
<keyword id="KW-0804">Transcription</keyword>
<keyword id="KW-0805">Transcription regulation</keyword>
<feature type="chain" id="PRO_0000235311" description="Cryptochrome DASH">
    <location>
        <begin position="1"/>
        <end position="489"/>
    </location>
</feature>
<feature type="domain" description="Photolyase/cryptochrome alpha/beta">
    <location>
        <begin position="6"/>
        <end position="140"/>
    </location>
</feature>
<feature type="strand" evidence="4">
    <location>
        <begin position="38"/>
        <end position="40"/>
    </location>
</feature>
<feature type="helix" evidence="4">
    <location>
        <begin position="42"/>
        <end position="45"/>
    </location>
</feature>
<feature type="strand" evidence="4">
    <location>
        <begin position="53"/>
        <end position="55"/>
    </location>
</feature>
<feature type="helix" evidence="4">
    <location>
        <begin position="57"/>
        <end position="76"/>
    </location>
</feature>
<feature type="strand" evidence="4">
    <location>
        <begin position="81"/>
        <end position="86"/>
    </location>
</feature>
<feature type="helix" evidence="4">
    <location>
        <begin position="88"/>
        <end position="98"/>
    </location>
</feature>
<feature type="strand" evidence="4">
    <location>
        <begin position="101"/>
        <end position="107"/>
    </location>
</feature>
<feature type="helix" evidence="4">
    <location>
        <begin position="112"/>
        <end position="128"/>
    </location>
</feature>
<feature type="strand" evidence="4">
    <location>
        <begin position="131"/>
        <end position="135"/>
    </location>
</feature>
<feature type="strand" evidence="4">
    <location>
        <begin position="138"/>
        <end position="141"/>
    </location>
</feature>
<feature type="helix" evidence="4">
    <location>
        <begin position="143"/>
        <end position="145"/>
    </location>
</feature>
<feature type="strand" evidence="4">
    <location>
        <begin position="146"/>
        <end position="148"/>
    </location>
</feature>
<feature type="helix" evidence="4">
    <location>
        <begin position="150"/>
        <end position="152"/>
    </location>
</feature>
<feature type="helix" evidence="4">
    <location>
        <begin position="157"/>
        <end position="165"/>
    </location>
</feature>
<feature type="turn" evidence="4">
    <location>
        <begin position="166"/>
        <end position="168"/>
    </location>
</feature>
<feature type="helix" evidence="4">
    <location>
        <begin position="196"/>
        <end position="198"/>
    </location>
</feature>
<feature type="helix" evidence="4">
    <location>
        <begin position="216"/>
        <end position="227"/>
    </location>
</feature>
<feature type="helix" evidence="4">
    <location>
        <begin position="233"/>
        <end position="235"/>
    </location>
</feature>
<feature type="helix" evidence="4">
    <location>
        <begin position="236"/>
        <end position="239"/>
    </location>
</feature>
<feature type="strand" evidence="4">
    <location>
        <begin position="244"/>
        <end position="246"/>
    </location>
</feature>
<feature type="helix" evidence="4">
    <location>
        <begin position="253"/>
        <end position="257"/>
    </location>
</feature>
<feature type="helix" evidence="4">
    <location>
        <begin position="263"/>
        <end position="276"/>
    </location>
</feature>
<feature type="helix" evidence="4">
    <location>
        <begin position="281"/>
        <end position="303"/>
    </location>
</feature>
<feature type="helix" evidence="4">
    <location>
        <begin position="304"/>
        <end position="308"/>
    </location>
</feature>
<feature type="turn" evidence="4">
    <location>
        <begin position="310"/>
        <end position="315"/>
    </location>
</feature>
<feature type="helix" evidence="4">
    <location>
        <begin position="324"/>
        <end position="331"/>
    </location>
</feature>
<feature type="helix" evidence="4">
    <location>
        <begin position="338"/>
        <end position="350"/>
    </location>
</feature>
<feature type="helix" evidence="4">
    <location>
        <begin position="355"/>
        <end position="367"/>
    </location>
</feature>
<feature type="helix" evidence="4">
    <location>
        <begin position="373"/>
        <end position="383"/>
    </location>
</feature>
<feature type="helix" evidence="4">
    <location>
        <begin position="389"/>
        <end position="399"/>
    </location>
</feature>
<feature type="helix" evidence="4">
    <location>
        <begin position="414"/>
        <end position="421"/>
    </location>
</feature>
<feature type="helix" evidence="4">
    <location>
        <begin position="426"/>
        <end position="431"/>
    </location>
</feature>
<feature type="helix" evidence="4">
    <location>
        <begin position="433"/>
        <end position="435"/>
    </location>
</feature>
<feature type="helix" evidence="4">
    <location>
        <begin position="441"/>
        <end position="444"/>
    </location>
</feature>
<feature type="helix" evidence="4">
    <location>
        <begin position="446"/>
        <end position="448"/>
    </location>
</feature>
<feature type="helix" evidence="4">
    <location>
        <begin position="451"/>
        <end position="456"/>
    </location>
</feature>
<feature type="turn" evidence="4">
    <location>
        <begin position="461"/>
        <end position="463"/>
    </location>
</feature>
<feature type="helix" evidence="4">
    <location>
        <begin position="472"/>
        <end position="480"/>
    </location>
</feature>
<accession>P77967</accession>
<dbReference type="EMBL" id="BA000022">
    <property type="protein sequence ID" value="BAA17766.1"/>
    <property type="status" value="ALT_INIT"/>
    <property type="molecule type" value="Genomic_DNA"/>
</dbReference>
<dbReference type="PIR" id="S74805">
    <property type="entry name" value="S74805"/>
</dbReference>
<dbReference type="PDB" id="1NP7">
    <property type="method" value="X-ray"/>
    <property type="resolution" value="1.90 A"/>
    <property type="chains" value="A/B=1-489"/>
</dbReference>
<dbReference type="PDBsum" id="1NP7"/>
<dbReference type="SMR" id="P77967"/>
<dbReference type="IntAct" id="P77967">
    <property type="interactions" value="3"/>
</dbReference>
<dbReference type="STRING" id="1148.gene:10498633"/>
<dbReference type="DrugBank" id="DB03147">
    <property type="generic name" value="Flavin adenine dinucleotide"/>
</dbReference>
<dbReference type="PaxDb" id="1148-1652848"/>
<dbReference type="EnsemblBacteria" id="BAA17766">
    <property type="protein sequence ID" value="BAA17766"/>
    <property type="gene ID" value="BAA17766"/>
</dbReference>
<dbReference type="KEGG" id="syn:sll1629"/>
<dbReference type="eggNOG" id="COG0415">
    <property type="taxonomic scope" value="Bacteria"/>
</dbReference>
<dbReference type="InParanoid" id="P77967"/>
<dbReference type="PhylomeDB" id="P77967"/>
<dbReference type="EvolutionaryTrace" id="P77967"/>
<dbReference type="Proteomes" id="UP000001425">
    <property type="component" value="Chromosome"/>
</dbReference>
<dbReference type="GO" id="GO:0003677">
    <property type="term" value="F:DNA binding"/>
    <property type="evidence" value="ECO:0000318"/>
    <property type="project" value="GO_Central"/>
</dbReference>
<dbReference type="GO" id="GO:0003913">
    <property type="term" value="F:DNA photolyase activity"/>
    <property type="evidence" value="ECO:0007669"/>
    <property type="project" value="InterPro"/>
</dbReference>
<dbReference type="GO" id="GO:0071949">
    <property type="term" value="F:FAD binding"/>
    <property type="evidence" value="ECO:0000318"/>
    <property type="project" value="GO_Central"/>
</dbReference>
<dbReference type="GO" id="GO:0000719">
    <property type="term" value="P:photoreactive repair"/>
    <property type="evidence" value="ECO:0000318"/>
    <property type="project" value="GO_Central"/>
</dbReference>
<dbReference type="Gene3D" id="1.25.40.80">
    <property type="match status" value="1"/>
</dbReference>
<dbReference type="Gene3D" id="1.10.579.10">
    <property type="entry name" value="DNA Cyclobutane Dipyrimidine Photolyase, subunit A, domain 3"/>
    <property type="match status" value="1"/>
</dbReference>
<dbReference type="Gene3D" id="3.40.50.620">
    <property type="entry name" value="HUPs"/>
    <property type="match status" value="1"/>
</dbReference>
<dbReference type="InterPro" id="IPR014133">
    <property type="entry name" value="Cry_DASH"/>
</dbReference>
<dbReference type="InterPro" id="IPR036134">
    <property type="entry name" value="Crypto/Photolyase_FAD-like_sf"/>
</dbReference>
<dbReference type="InterPro" id="IPR036155">
    <property type="entry name" value="Crypto/Photolyase_N_sf"/>
</dbReference>
<dbReference type="InterPro" id="IPR005101">
    <property type="entry name" value="Cryptochr/Photolyase_FAD-bd"/>
</dbReference>
<dbReference type="InterPro" id="IPR002081">
    <property type="entry name" value="Cryptochrome/DNA_photolyase_1"/>
</dbReference>
<dbReference type="InterPro" id="IPR018394">
    <property type="entry name" value="DNA_photolyase_1_CS_C"/>
</dbReference>
<dbReference type="InterPro" id="IPR006050">
    <property type="entry name" value="DNA_photolyase_N"/>
</dbReference>
<dbReference type="InterPro" id="IPR014729">
    <property type="entry name" value="Rossmann-like_a/b/a_fold"/>
</dbReference>
<dbReference type="NCBIfam" id="TIGR02765">
    <property type="entry name" value="crypto_DASH"/>
    <property type="match status" value="1"/>
</dbReference>
<dbReference type="PANTHER" id="PTHR11455">
    <property type="entry name" value="CRYPTOCHROME"/>
    <property type="match status" value="1"/>
</dbReference>
<dbReference type="PANTHER" id="PTHR11455:SF22">
    <property type="entry name" value="CRYPTOCHROME DASH"/>
    <property type="match status" value="1"/>
</dbReference>
<dbReference type="Pfam" id="PF00875">
    <property type="entry name" value="DNA_photolyase"/>
    <property type="match status" value="1"/>
</dbReference>
<dbReference type="Pfam" id="PF03441">
    <property type="entry name" value="FAD_binding_7"/>
    <property type="match status" value="1"/>
</dbReference>
<dbReference type="PRINTS" id="PR00147">
    <property type="entry name" value="DNAPHOTLYASE"/>
</dbReference>
<dbReference type="SUPFAM" id="SSF48173">
    <property type="entry name" value="Cryptochrome/photolyase FAD-binding domain"/>
    <property type="match status" value="1"/>
</dbReference>
<dbReference type="SUPFAM" id="SSF52425">
    <property type="entry name" value="Cryptochrome/photolyase, N-terminal domain"/>
    <property type="match status" value="1"/>
</dbReference>
<dbReference type="PROSITE" id="PS00394">
    <property type="entry name" value="DNA_PHOTOLYASES_1_1"/>
    <property type="match status" value="1"/>
</dbReference>
<dbReference type="PROSITE" id="PS51645">
    <property type="entry name" value="PHR_CRY_ALPHA_BETA"/>
    <property type="match status" value="1"/>
</dbReference>
<gene>
    <name type="primary">cry</name>
    <name type="synonym">phr</name>
    <name type="synonym">phrB</name>
    <name type="ordered locus">sll1629</name>
</gene>
<proteinExistence type="evidence at protein level"/>
<sequence length="489" mass="57040">MKHVPPTVLVWFRNDLRLHDHEPLHRALKSGLAITAVYCYDPRQFAQTHQGFAKTGPWRSNFLQQSVQNLAESLQKVGNKLLVTTGLPEQVIPQIAKQINAKTIYYHREVTQEELDVERNLVKQLTILGIEAKGYWGSTLCHPEDLPFSIQDLPDLFTKFRKDIEKKKISIRPCFFAPSQLLPSPNIKLELTAPPPEFFPQINFDHRSVLAFQGGETAGLARLQDYFWHGDRLKDYKETRNGMVGADYSSKFSPWLALGCLSPRFIYQEVKRYEQERVSNDSTHWLIFELLWRDFFRFVAQKYGNKLFNRGGLLNKNFPWQEDQVRFELWRSGQTGYPLVDANMRELNLTGFMSNRGRQNVASFLCKNLGIDWRWGAEWFESCLIDYDVCSNWGNWNYTAGIGNDARDFRYFNIPKQSQQYDPQGTYLRHWLPELKNLPGDKIHQPWLLSATEQKQWGVQLGVDYPRPCVNFHQSVEARRKIEQMGVIA</sequence>
<name>CRYD_SYNY3</name>
<reference key="1">
    <citation type="journal article" date="1996" name="DNA Res.">
        <title>Sequence analysis of the genome of the unicellular cyanobacterium Synechocystis sp. strain PCC6803. II. Sequence determination of the entire genome and assignment of potential protein-coding regions.</title>
        <authorList>
            <person name="Kaneko T."/>
            <person name="Sato S."/>
            <person name="Kotani H."/>
            <person name="Tanaka A."/>
            <person name="Asamizu E."/>
            <person name="Nakamura Y."/>
            <person name="Miyajima N."/>
            <person name="Hirosawa M."/>
            <person name="Sugiura M."/>
            <person name="Sasamoto S."/>
            <person name="Kimura T."/>
            <person name="Hosouchi T."/>
            <person name="Matsuno A."/>
            <person name="Muraki A."/>
            <person name="Nakazaki N."/>
            <person name="Naruo K."/>
            <person name="Okumura S."/>
            <person name="Shimpo S."/>
            <person name="Takeuchi C."/>
            <person name="Wada T."/>
            <person name="Watanabe A."/>
            <person name="Yamada M."/>
            <person name="Yasuda M."/>
            <person name="Tabata S."/>
        </authorList>
    </citation>
    <scope>NUCLEOTIDE SEQUENCE [LARGE SCALE GENOMIC DNA]</scope>
    <source>
        <strain>ATCC 27184 / PCC 6803 / Kazusa</strain>
    </source>
</reference>
<reference key="2">
    <citation type="journal article" date="2000" name="Nucleic Acids Res.">
        <title>Bacterial cryptochrome and photolyase: characterization of two photolyase-like genes of Synechocystis sp. PCC6803.</title>
        <authorList>
            <person name="Hitomi K."/>
            <person name="Okamoto K."/>
            <person name="Daiyasu H."/>
            <person name="Miyashita H."/>
            <person name="Iwai S."/>
            <person name="Toh H."/>
            <person name="Ishiura M."/>
            <person name="Todo T."/>
        </authorList>
    </citation>
    <scope>EXPRESSION IN E.COLI</scope>
    <scope>COFACTOR</scope>
</reference>
<reference key="3">
    <citation type="journal article" date="2003" name="J. Biol. Chem.">
        <title>Purification and characterization of three members of the photolyase/cryptochrome family blue-light photoreceptors from Vibrio cholerae.</title>
        <authorList>
            <person name="Worthington E.N."/>
            <person name="Kavakli I.H."/>
            <person name="Berrocal-Tito G."/>
            <person name="Bondo B.E."/>
            <person name="Sancar A."/>
        </authorList>
    </citation>
    <scope>DISCUSSION OF SEQUENCE AND COFACTOR</scope>
</reference>
<reference key="4">
    <citation type="journal article" date="2003" name="Mol. Cell">
        <title>Identification of a new cryptochrome class. Structure, function, and evolution.</title>
        <authorList>
            <person name="Brudler R."/>
            <person name="Hitomi K."/>
            <person name="Daiyasu H."/>
            <person name="Toh H."/>
            <person name="Kucho K."/>
            <person name="Ishiura M."/>
            <person name="Kanehisa M."/>
            <person name="Roberts V.A."/>
            <person name="Todo T."/>
            <person name="Tainer J.A."/>
            <person name="Getzoff E.D."/>
        </authorList>
    </citation>
    <scope>X-RAY CRYSTALLOGRAPHY (1.9 ANGSTROMS) OF 2-453</scope>
    <scope>CHARACTERIZATION</scope>
</reference>
<comment type="function">
    <text>May have a photoreceptor function. Binds DNA; represses transcription of at least 8 genes, including slr0364 and slr1866. Does not encode a DNA photolyase function. Its disruption does not affect circadian rhythm.</text>
</comment>
<comment type="cofactor">
    <cofactor evidence="2">
        <name>FAD</name>
        <dbReference type="ChEBI" id="CHEBI:57692"/>
    </cofactor>
    <text evidence="2">Binds 1 FAD per subunit.</text>
</comment>
<comment type="cofactor">
    <cofactor evidence="1">
        <name>(6R)-5,10-methylene-5,6,7,8-tetrahydrofolate</name>
        <dbReference type="ChEBI" id="CHEBI:15636"/>
    </cofactor>
    <text evidence="1">Binds 1 5,10-methenyltetrahydrofolate (MTHF) per subunit.</text>
</comment>
<comment type="similarity">
    <text evidence="3">Belongs to the DNA photolyase class-1 family.</text>
</comment>
<comment type="sequence caution" evidence="3">
    <conflict type="erroneous initiation">
        <sequence resource="EMBL-CDS" id="BAA17766"/>
    </conflict>
</comment>
<evidence type="ECO:0000250" key="1">
    <source>
        <dbReference type="UniProtKB" id="Q84KJ5"/>
    </source>
</evidence>
<evidence type="ECO:0000269" key="2">
    <source>
    </source>
</evidence>
<evidence type="ECO:0000305" key="3"/>
<evidence type="ECO:0007829" key="4">
    <source>
        <dbReference type="PDB" id="1NP7"/>
    </source>
</evidence>
<protein>
    <recommendedName>
        <fullName>Cryptochrome DASH</fullName>
    </recommendedName>
</protein>
<organism>
    <name type="scientific">Synechocystis sp. (strain ATCC 27184 / PCC 6803 / Kazusa)</name>
    <dbReference type="NCBI Taxonomy" id="1111708"/>
    <lineage>
        <taxon>Bacteria</taxon>
        <taxon>Bacillati</taxon>
        <taxon>Cyanobacteriota</taxon>
        <taxon>Cyanophyceae</taxon>
        <taxon>Synechococcales</taxon>
        <taxon>Merismopediaceae</taxon>
        <taxon>Synechocystis</taxon>
    </lineage>
</organism>